<keyword id="KW-0002">3D-structure</keyword>
<keyword id="KW-0007">Acetylation</keyword>
<keyword id="KW-0903">Direct protein sequencing</keyword>
<keyword id="KW-1185">Reference proteome</keyword>
<keyword id="KW-0678">Repressor</keyword>
<keyword id="KW-0687">Ribonucleoprotein</keyword>
<keyword id="KW-0689">Ribosomal protein</keyword>
<keyword id="KW-0694">RNA-binding</keyword>
<keyword id="KW-0699">rRNA-binding</keyword>
<keyword id="KW-0810">Translation regulation</keyword>
<reference key="1">
    <citation type="journal article" date="1979" name="Proc. Natl. Acad. Sci. U.S.A.">
        <title>Nucleotide sequence of the ribosomal protein gene cluster adjacent to the gene for RNA polymerase subunit beta in Escherichia coli.</title>
        <authorList>
            <person name="Post L.E."/>
            <person name="Strycharz G.D."/>
            <person name="Nomura M."/>
            <person name="Lewis H."/>
            <person name="Dennis P.P."/>
        </authorList>
    </citation>
    <scope>NUCLEOTIDE SEQUENCE [GENOMIC DNA]</scope>
</reference>
<reference key="2">
    <citation type="journal article" date="1993" name="Nucleic Acids Res.">
        <title>Analysis of the Escherichia coli genome. IV. DNA sequence of the region from 89.2 to 92.8 minutes.</title>
        <authorList>
            <person name="Blattner F.R."/>
            <person name="Burland V.D."/>
            <person name="Plunkett G. III"/>
            <person name="Sofia H.J."/>
            <person name="Daniels D.L."/>
        </authorList>
    </citation>
    <scope>NUCLEOTIDE SEQUENCE [LARGE SCALE GENOMIC DNA]</scope>
    <source>
        <strain>K12 / MG1655 / ATCC 47076</strain>
    </source>
</reference>
<reference key="3">
    <citation type="journal article" date="1997" name="Science">
        <title>The complete genome sequence of Escherichia coli K-12.</title>
        <authorList>
            <person name="Blattner F.R."/>
            <person name="Plunkett G. III"/>
            <person name="Bloch C.A."/>
            <person name="Perna N.T."/>
            <person name="Burland V."/>
            <person name="Riley M."/>
            <person name="Collado-Vides J."/>
            <person name="Glasner J.D."/>
            <person name="Rode C.K."/>
            <person name="Mayhew G.F."/>
            <person name="Gregor J."/>
            <person name="Davis N.W."/>
            <person name="Kirkpatrick H.A."/>
            <person name="Goeden M.A."/>
            <person name="Rose D.J."/>
            <person name="Mau B."/>
            <person name="Shao Y."/>
        </authorList>
    </citation>
    <scope>NUCLEOTIDE SEQUENCE [LARGE SCALE GENOMIC DNA]</scope>
    <source>
        <strain>K12 / MG1655 / ATCC 47076</strain>
    </source>
</reference>
<reference key="4">
    <citation type="journal article" date="2006" name="Mol. Syst. Biol.">
        <title>Highly accurate genome sequences of Escherichia coli K-12 strains MG1655 and W3110.</title>
        <authorList>
            <person name="Hayashi K."/>
            <person name="Morooka N."/>
            <person name="Yamamoto Y."/>
            <person name="Fujita K."/>
            <person name="Isono K."/>
            <person name="Choi S."/>
            <person name="Ohtsubo E."/>
            <person name="Baba T."/>
            <person name="Wanner B.L."/>
            <person name="Mori H."/>
            <person name="Horiuchi T."/>
        </authorList>
    </citation>
    <scope>NUCLEOTIDE SEQUENCE [LARGE SCALE GENOMIC DNA]</scope>
    <source>
        <strain>K12 / W3110 / ATCC 27325 / DSM 5911</strain>
    </source>
</reference>
<reference key="5">
    <citation type="journal article" date="1976" name="FEBS Lett.">
        <title>The ribosomal protein L8 is a complex L7/L12 and L10.</title>
        <authorList>
            <person name="Pettersson I."/>
            <person name="Hardy S.J.S."/>
            <person name="Liljas A."/>
        </authorList>
    </citation>
    <scope>PROTEIN SEQUENCE OF 2-165</scope>
    <scope>SUBUNIT</scope>
    <source>
        <strain>MRE-600</strain>
    </source>
</reference>
<reference key="6">
    <citation type="journal article" date="1976" name="FEBS Lett.">
        <title>The primary structure of protein L10 from Escherichia coli ribosomes.</title>
        <authorList>
            <person name="Dovgas N.V."/>
            <person name="Vinokurov L.M."/>
            <person name="Velmoga I.S."/>
            <person name="Alakhov Y.B."/>
            <person name="Ovchinnikov Y.A."/>
        </authorList>
    </citation>
    <scope>PROTEIN SEQUENCE OF 2-165</scope>
    <scope>SEQUENCE REVISION</scope>
    <scope>SUBUNIT</scope>
    <source>
        <strain>MRE-600</strain>
    </source>
</reference>
<reference key="7">
    <citation type="journal article" date="1976" name="Hoppe-Seyler's Z. Physiol. Chem.">
        <title>Primary structure of protein L10 from the large subunit of Escherichia coli ribosomes.</title>
        <authorList>
            <person name="Heiland I."/>
            <person name="Brauer D."/>
            <person name="Wittmann-Liebold B."/>
        </authorList>
    </citation>
    <scope>PROTEIN SEQUENCE OF 2-165</scope>
    <scope>SUBUNIT</scope>
    <source>
        <strain>K12</strain>
    </source>
</reference>
<reference key="8">
    <citation type="journal article" date="1987" name="J. Mol. Biol.">
        <title>Feedback regulation of the rplJL-rpoBC ribosomal protein operon of Escherichia coli requires a region of mRNA secondary structure.</title>
        <authorList>
            <person name="Climie S.C."/>
            <person name="Friesen J.D."/>
        </authorList>
    </citation>
    <scope>MECHANISM OF TRANSLATION REGULATION</scope>
</reference>
<reference key="9">
    <citation type="journal article" date="1999" name="Anal. Biochem.">
        <title>Observation of Escherichia coli ribosomal proteins and their posttranslational modifications by mass spectrometry.</title>
        <authorList>
            <person name="Arnold R.J."/>
            <person name="Reilly J.P."/>
        </authorList>
    </citation>
    <scope>MASS SPECTROMETRY</scope>
    <scope>SUBUNIT</scope>
    <source>
        <strain>K12 / ATCC 25404 / DSM 5698 / NCIMB 11290</strain>
    </source>
</reference>
<reference key="10">
    <citation type="journal article" date="2005" name="Proc. Natl. Acad. Sci. U.S.A.">
        <title>Heptameric (L12)6/L10 rather than canonical pentameric complexes are found by tandem MS of intact ribosomes from thermophilic bacteria.</title>
        <authorList>
            <person name="Ilag L.L."/>
            <person name="Videler H."/>
            <person name="McKay A.R."/>
            <person name="Sobott F."/>
            <person name="Fucini P."/>
            <person name="Nierhaus K.H."/>
            <person name="Robinson C.V."/>
        </authorList>
    </citation>
    <scope>SUBUNIT</scope>
    <scope>STOICHIOMETRY</scope>
    <scope>MASS SPECTROMETRY</scope>
</reference>
<reference key="11">
    <citation type="journal article" date="2009" name="Mol. Cell. Proteomics">
        <title>Lysine acetylation is a highly abundant and evolutionarily conserved modification in Escherichia coli.</title>
        <authorList>
            <person name="Zhang J."/>
            <person name="Sprung R."/>
            <person name="Pei J."/>
            <person name="Tan X."/>
            <person name="Kim S."/>
            <person name="Zhu H."/>
            <person name="Liu C.F."/>
            <person name="Grishin N.V."/>
            <person name="Zhao Y."/>
        </authorList>
    </citation>
    <scope>ACETYLATION [LARGE SCALE ANALYSIS] AT LYS-37 AND LYS-105</scope>
    <scope>IDENTIFICATION BY MASS SPECTROMETRY</scope>
    <source>
        <strain>K12 / JW1106</strain>
        <strain>K12 / MG1655 / ATCC 47076</strain>
    </source>
</reference>
<reference key="12">
    <citation type="journal article" date="2012" name="Nucleic Acids Res.">
        <title>Bacterial ribosome requires multiple L12 dimers for efficient initiation and elongation of protein synthesis involving IF2 and EF-G.</title>
        <authorList>
            <person name="Mandava C.S."/>
            <person name="Peisker K."/>
            <person name="Ederth J."/>
            <person name="Kumar R."/>
            <person name="Ge X."/>
            <person name="Szaflarski W."/>
            <person name="Sanyal S."/>
        </authorList>
    </citation>
    <scope>MUTAGENESIS OF 156-ALA--ALA-165</scope>
    <source>
        <strain>K12 / MG1655 / ATCC 47076</strain>
    </source>
</reference>
<reference key="13">
    <citation type="journal article" date="2014" name="Curr. Opin. Struct. Biol.">
        <title>A new system for naming ribosomal proteins.</title>
        <authorList>
            <person name="Ban N."/>
            <person name="Beckmann R."/>
            <person name="Cate J.H.D."/>
            <person name="Dinman J.D."/>
            <person name="Dragon F."/>
            <person name="Ellis S.R."/>
            <person name="Lafontaine D.L.J."/>
            <person name="Lindahl L."/>
            <person name="Liljas A."/>
            <person name="Lipton J.M."/>
            <person name="McAlear M.A."/>
            <person name="Moore P.B."/>
            <person name="Noller H.F."/>
            <person name="Ortega J."/>
            <person name="Panse V.G."/>
            <person name="Ramakrishnan V."/>
            <person name="Spahn C.M.T."/>
            <person name="Steitz T.A."/>
            <person name="Tchorzewski M."/>
            <person name="Tollervey D."/>
            <person name="Warren A.J."/>
            <person name="Williamson J.R."/>
            <person name="Wilson D."/>
            <person name="Yonath A."/>
            <person name="Yusupov M."/>
        </authorList>
    </citation>
    <scope>NOMENCLATURE</scope>
</reference>
<reference key="14">
    <citation type="journal article" date="2014" name="Cell Rep.">
        <title>Molecular basis for the ribosome functioning as an L-tryptophan sensor.</title>
        <authorList>
            <person name="Bischoff L."/>
            <person name="Berninghausen O."/>
            <person name="Beckmann R."/>
        </authorList>
    </citation>
    <scope>STRUCTURE BY ELECTRON MICROSCOPY (3.80 ANGSTROMS) OF 1-148 IN TNAC-STALLED 50S RIBOSOMAL SUBUNIT</scope>
    <scope>SUBUNIT</scope>
    <source>
        <strain>K12 / A19 / KC6</strain>
    </source>
</reference>
<reference key="15">
    <citation type="journal article" date="2017" name="Nature">
        <title>Mechanistic insights into the alternative translation termination by ArfA and RF2.</title>
        <authorList>
            <person name="Ma C."/>
            <person name="Kurita D."/>
            <person name="Li N."/>
            <person name="Chen Y."/>
            <person name="Himeno H."/>
            <person name="Gao N."/>
        </authorList>
    </citation>
    <scope>STRUCTURE BY ELECTRON MICROSCOPY (3.0 ANGSTROMS) OF 70S RIBOSOME IN COMPLEX WITH ARFA AND RF2</scope>
    <scope>SUBUNIT</scope>
</reference>
<reference key="16">
    <citation type="journal article" date="2017" name="Nature">
        <title>Structural basis for ArfA-RF2-mediated translation termination on mRNAs lacking stop codons.</title>
        <authorList>
            <person name="Huter P."/>
            <person name="Mueller C."/>
            <person name="Beckert B."/>
            <person name="Arenz S."/>
            <person name="Berninghausen O."/>
            <person name="Beckmann R."/>
            <person name="Wilson D.N."/>
        </authorList>
    </citation>
    <scope>STRUCTURE BY ELECTRON MICROSCOPY (3.1 ANGSTROMS) OF 70S RIBOSOME IN COMPLEX WITH ARFA AND RF2</scope>
    <scope>SUBUNIT</scope>
</reference>
<reference key="17">
    <citation type="journal article" date="2016" name="Science">
        <title>Translational termination without a stop codon.</title>
        <authorList>
            <person name="James N.R."/>
            <person name="Brown A."/>
            <person name="Gordiyenko Y."/>
            <person name="Ramakrishnan V."/>
        </authorList>
    </citation>
    <scope>STRUCTURE BY ELECTRON MICROSCOPY (2.97 ANGSTROMS) OF 70S RIBOSOME IN COMPLEX WITH ARFA AND RF2</scope>
    <scope>SUBUNIT</scope>
</reference>
<reference key="18">
    <citation type="journal article" date="2017" name="Nature">
        <title>Structural basis of co-translational quality control by ArfA and RF2 bound to ribosome.</title>
        <authorList>
            <person name="Zeng F."/>
            <person name="Chen Y."/>
            <person name="Remis J."/>
            <person name="Shekhar M."/>
            <person name="Phillips J.C."/>
            <person name="Tajkhorshid E."/>
            <person name="Jin H."/>
        </authorList>
    </citation>
    <scope>STRUCTURE BY ELECTRON MICROSCOPY (3.52 ANGSTROMS) OF 70S RIBOSOME IN COMPLEX WITH ARFA AND RF2</scope>
    <scope>SUBUNIT</scope>
</reference>
<name>RL10_ECOLI</name>
<sequence>MALNLQDKQAIVAEVSEVAKGALSAVVADSRGVTVDKMTELRKAGREAGVYMRVVRNTLLRRAVEGTPFECLKDAFVGPTLIAYSMEHPGAAARLFKEFAKANAKFEVKAAAFEGELIPASQIDRLATLPTYEEAIARLMATMKEASAGKLVRTLAAVRDAKEAA</sequence>
<dbReference type="EMBL" id="V00339">
    <property type="protein sequence ID" value="CAA23623.1"/>
    <property type="molecule type" value="Genomic_DNA"/>
</dbReference>
<dbReference type="EMBL" id="U00006">
    <property type="protein sequence ID" value="AAC43083.1"/>
    <property type="molecule type" value="Genomic_DNA"/>
</dbReference>
<dbReference type="EMBL" id="U00096">
    <property type="protein sequence ID" value="AAC76959.1"/>
    <property type="molecule type" value="Genomic_DNA"/>
</dbReference>
<dbReference type="EMBL" id="AP009048">
    <property type="protein sequence ID" value="BAE77335.1"/>
    <property type="molecule type" value="Genomic_DNA"/>
</dbReference>
<dbReference type="PIR" id="S12574">
    <property type="entry name" value="R5EC10"/>
</dbReference>
<dbReference type="RefSeq" id="NP_418412.1">
    <property type="nucleotide sequence ID" value="NC_000913.3"/>
</dbReference>
<dbReference type="RefSeq" id="WP_001207201.1">
    <property type="nucleotide sequence ID" value="NZ_STEB01000045.1"/>
</dbReference>
<dbReference type="PDB" id="3J7Z">
    <property type="method" value="EM"/>
    <property type="resolution" value="3.90 A"/>
    <property type="chains" value="5=1-165"/>
</dbReference>
<dbReference type="PDB" id="3J9Y">
    <property type="method" value="EM"/>
    <property type="resolution" value="3.90 A"/>
    <property type="chains" value="5=1-165"/>
</dbReference>
<dbReference type="PDB" id="3J9Z">
    <property type="method" value="EM"/>
    <property type="resolution" value="3.60 A"/>
    <property type="chains" value="LD=2-165"/>
</dbReference>
<dbReference type="PDB" id="3JA1">
    <property type="method" value="EM"/>
    <property type="resolution" value="3.60 A"/>
    <property type="chains" value="LJ=2-165"/>
</dbReference>
<dbReference type="PDB" id="3JCJ">
    <property type="method" value="EM"/>
    <property type="resolution" value="3.70 A"/>
    <property type="chains" value="e=1-165"/>
</dbReference>
<dbReference type="PDB" id="4UY8">
    <property type="method" value="EM"/>
    <property type="resolution" value="3.80 A"/>
    <property type="chains" value="5=1-148"/>
</dbReference>
<dbReference type="PDB" id="4V6N">
    <property type="method" value="EM"/>
    <property type="resolution" value="12.10 A"/>
    <property type="chains" value="AJ=2-165"/>
</dbReference>
<dbReference type="PDB" id="4V6O">
    <property type="method" value="EM"/>
    <property type="resolution" value="14.70 A"/>
    <property type="chains" value="BJ=2-165"/>
</dbReference>
<dbReference type="PDB" id="4V6P">
    <property type="method" value="EM"/>
    <property type="resolution" value="13.50 A"/>
    <property type="chains" value="BJ=2-165"/>
</dbReference>
<dbReference type="PDB" id="4V6Q">
    <property type="method" value="EM"/>
    <property type="resolution" value="11.50 A"/>
    <property type="chains" value="BJ=2-165"/>
</dbReference>
<dbReference type="PDB" id="4V6R">
    <property type="method" value="EM"/>
    <property type="resolution" value="11.50 A"/>
    <property type="chains" value="BJ=2-165"/>
</dbReference>
<dbReference type="PDB" id="4V6S">
    <property type="method" value="EM"/>
    <property type="resolution" value="13.10 A"/>
    <property type="chains" value="AJ=2-165"/>
</dbReference>
<dbReference type="PDB" id="4V6V">
    <property type="method" value="EM"/>
    <property type="resolution" value="9.80 A"/>
    <property type="chains" value="BJ=2-165"/>
</dbReference>
<dbReference type="PDB" id="4V7B">
    <property type="method" value="EM"/>
    <property type="resolution" value="6.80 A"/>
    <property type="chains" value="B5=1-165"/>
</dbReference>
<dbReference type="PDB" id="4V7C">
    <property type="method" value="EM"/>
    <property type="resolution" value="7.60 A"/>
    <property type="chains" value="BJ=1-165"/>
</dbReference>
<dbReference type="PDB" id="4V7D">
    <property type="method" value="EM"/>
    <property type="resolution" value="7.60 A"/>
    <property type="chains" value="AJ=1-165"/>
</dbReference>
<dbReference type="PDB" id="4V85">
    <property type="method" value="X-ray"/>
    <property type="resolution" value="3.20 A"/>
    <property type="chains" value="BH=1-165"/>
</dbReference>
<dbReference type="PDB" id="4V89">
    <property type="method" value="X-ray"/>
    <property type="resolution" value="3.70 A"/>
    <property type="chains" value="BH=1-165"/>
</dbReference>
<dbReference type="PDB" id="4V9O">
    <property type="method" value="X-ray"/>
    <property type="resolution" value="2.90 A"/>
    <property type="chains" value="A5/C5/E5=1-165"/>
</dbReference>
<dbReference type="PDB" id="4V9P">
    <property type="method" value="X-ray"/>
    <property type="resolution" value="2.90 A"/>
    <property type="chains" value="A5/E5=1-165"/>
</dbReference>
<dbReference type="PDB" id="4YBB">
    <property type="method" value="X-ray"/>
    <property type="resolution" value="2.10 A"/>
    <property type="chains" value="DI=2-136"/>
</dbReference>
<dbReference type="PDB" id="5ADY">
    <property type="method" value="EM"/>
    <property type="resolution" value="4.50 A"/>
    <property type="chains" value="7=1-165"/>
</dbReference>
<dbReference type="PDB" id="5AFI">
    <property type="method" value="EM"/>
    <property type="resolution" value="2.90 A"/>
    <property type="chains" value="5=1-165"/>
</dbReference>
<dbReference type="PDB" id="5GAD">
    <property type="method" value="EM"/>
    <property type="resolution" value="3.70 A"/>
    <property type="chains" value="I=1-165"/>
</dbReference>
<dbReference type="PDB" id="5GAE">
    <property type="method" value="EM"/>
    <property type="resolution" value="3.33 A"/>
    <property type="chains" value="I=1-165"/>
</dbReference>
<dbReference type="PDB" id="5GAF">
    <property type="method" value="EM"/>
    <property type="resolution" value="4.30 A"/>
    <property type="chains" value="I=2-126"/>
</dbReference>
<dbReference type="PDB" id="5GAG">
    <property type="method" value="EM"/>
    <property type="resolution" value="3.80 A"/>
    <property type="chains" value="I=1-165"/>
</dbReference>
<dbReference type="PDB" id="5GAH">
    <property type="method" value="EM"/>
    <property type="resolution" value="3.80 A"/>
    <property type="chains" value="I=1-165"/>
</dbReference>
<dbReference type="PDB" id="5H5U">
    <property type="method" value="EM"/>
    <property type="resolution" value="3.00 A"/>
    <property type="chains" value="I=2-165"/>
</dbReference>
<dbReference type="PDB" id="5IQR">
    <property type="method" value="EM"/>
    <property type="resolution" value="3.00 A"/>
    <property type="chains" value="H=1-165"/>
</dbReference>
<dbReference type="PDB" id="5IT8">
    <property type="method" value="X-ray"/>
    <property type="resolution" value="3.12 A"/>
    <property type="chains" value="DI=2-136"/>
</dbReference>
<dbReference type="PDB" id="5J5B">
    <property type="method" value="X-ray"/>
    <property type="resolution" value="2.80 A"/>
    <property type="chains" value="DI=2-136"/>
</dbReference>
<dbReference type="PDB" id="5J7L">
    <property type="method" value="X-ray"/>
    <property type="resolution" value="3.00 A"/>
    <property type="chains" value="DI=2-136"/>
</dbReference>
<dbReference type="PDB" id="5J88">
    <property type="method" value="X-ray"/>
    <property type="resolution" value="3.32 A"/>
    <property type="chains" value="DI=2-136"/>
</dbReference>
<dbReference type="PDB" id="5J8A">
    <property type="method" value="X-ray"/>
    <property type="resolution" value="3.10 A"/>
    <property type="chains" value="DI=2-136"/>
</dbReference>
<dbReference type="PDB" id="5J91">
    <property type="method" value="X-ray"/>
    <property type="resolution" value="2.96 A"/>
    <property type="chains" value="DI=2-136"/>
</dbReference>
<dbReference type="PDB" id="5JC9">
    <property type="method" value="X-ray"/>
    <property type="resolution" value="3.03 A"/>
    <property type="chains" value="DI=2-136"/>
</dbReference>
<dbReference type="PDB" id="5KCR">
    <property type="method" value="EM"/>
    <property type="resolution" value="3.60 A"/>
    <property type="chains" value="1J=1-165"/>
</dbReference>
<dbReference type="PDB" id="5KCS">
    <property type="method" value="EM"/>
    <property type="resolution" value="3.90 A"/>
    <property type="chains" value="1J=1-165"/>
</dbReference>
<dbReference type="PDB" id="5KPS">
    <property type="method" value="EM"/>
    <property type="resolution" value="3.90 A"/>
    <property type="chains" value="H=1-165"/>
</dbReference>
<dbReference type="PDB" id="5KPV">
    <property type="method" value="EM"/>
    <property type="resolution" value="4.10 A"/>
    <property type="chains" value="G=1-165"/>
</dbReference>
<dbReference type="PDB" id="5KPW">
    <property type="method" value="EM"/>
    <property type="resolution" value="3.90 A"/>
    <property type="chains" value="G=1-165"/>
</dbReference>
<dbReference type="PDB" id="5KPX">
    <property type="method" value="EM"/>
    <property type="resolution" value="3.90 A"/>
    <property type="chains" value="G=1-165"/>
</dbReference>
<dbReference type="PDB" id="5L3P">
    <property type="method" value="EM"/>
    <property type="resolution" value="3.70 A"/>
    <property type="chains" value="J=1-165"/>
</dbReference>
<dbReference type="PDB" id="5MDV">
    <property type="method" value="EM"/>
    <property type="resolution" value="2.97 A"/>
    <property type="chains" value="H=1-165"/>
</dbReference>
<dbReference type="PDB" id="5MDW">
    <property type="method" value="EM"/>
    <property type="resolution" value="3.06 A"/>
    <property type="chains" value="H=1-165"/>
</dbReference>
<dbReference type="PDB" id="5MDY">
    <property type="method" value="EM"/>
    <property type="resolution" value="3.35 A"/>
    <property type="chains" value="H=1-165"/>
</dbReference>
<dbReference type="PDB" id="5MDZ">
    <property type="method" value="EM"/>
    <property type="resolution" value="3.10 A"/>
    <property type="chains" value="H=1-165"/>
</dbReference>
<dbReference type="PDB" id="5NCO">
    <property type="method" value="EM"/>
    <property type="resolution" value="4.80 A"/>
    <property type="chains" value="I=2-126"/>
</dbReference>
<dbReference type="PDB" id="5NP6">
    <property type="method" value="EM"/>
    <property type="resolution" value="3.60 A"/>
    <property type="chains" value="3=1-131"/>
</dbReference>
<dbReference type="PDB" id="5O2R">
    <property type="method" value="EM"/>
    <property type="resolution" value="3.40 A"/>
    <property type="chains" value="5=1-131"/>
</dbReference>
<dbReference type="PDB" id="5U9F">
    <property type="method" value="EM"/>
    <property type="resolution" value="3.20 A"/>
    <property type="chains" value="10=1-165"/>
</dbReference>
<dbReference type="PDB" id="5U9G">
    <property type="method" value="EM"/>
    <property type="resolution" value="3.20 A"/>
    <property type="chains" value="10=1-165"/>
</dbReference>
<dbReference type="PDB" id="5UYK">
    <property type="method" value="EM"/>
    <property type="resolution" value="3.90 A"/>
    <property type="chains" value="10=1-131"/>
</dbReference>
<dbReference type="PDB" id="5UYL">
    <property type="method" value="EM"/>
    <property type="resolution" value="3.60 A"/>
    <property type="chains" value="10=1-131"/>
</dbReference>
<dbReference type="PDB" id="5UYM">
    <property type="method" value="EM"/>
    <property type="resolution" value="3.20 A"/>
    <property type="chains" value="10=1-131"/>
</dbReference>
<dbReference type="PDB" id="5UYN">
    <property type="method" value="EM"/>
    <property type="resolution" value="4.00 A"/>
    <property type="chains" value="10=1-131"/>
</dbReference>
<dbReference type="PDB" id="5UYP">
    <property type="method" value="EM"/>
    <property type="resolution" value="3.90 A"/>
    <property type="chains" value="10=1-131"/>
</dbReference>
<dbReference type="PDB" id="5UYQ">
    <property type="method" value="EM"/>
    <property type="resolution" value="3.80 A"/>
    <property type="chains" value="10=1-131"/>
</dbReference>
<dbReference type="PDB" id="5WDT">
    <property type="method" value="EM"/>
    <property type="resolution" value="3.00 A"/>
    <property type="chains" value="5=1-131"/>
</dbReference>
<dbReference type="PDB" id="5WE4">
    <property type="method" value="EM"/>
    <property type="resolution" value="3.10 A"/>
    <property type="chains" value="5=1-131"/>
</dbReference>
<dbReference type="PDB" id="5WE6">
    <property type="method" value="EM"/>
    <property type="resolution" value="3.40 A"/>
    <property type="chains" value="5=1-131"/>
</dbReference>
<dbReference type="PDB" id="5WF0">
    <property type="method" value="EM"/>
    <property type="resolution" value="3.60 A"/>
    <property type="chains" value="5=1-131"/>
</dbReference>
<dbReference type="PDB" id="5WFK">
    <property type="method" value="EM"/>
    <property type="resolution" value="3.40 A"/>
    <property type="chains" value="5=1-131"/>
</dbReference>
<dbReference type="PDB" id="5WFS">
    <property type="method" value="EM"/>
    <property type="resolution" value="3.00 A"/>
    <property type="chains" value="5=1-131"/>
</dbReference>
<dbReference type="PDB" id="6BU8">
    <property type="method" value="EM"/>
    <property type="resolution" value="3.50 A"/>
    <property type="chains" value="10=1-131"/>
</dbReference>
<dbReference type="PDB" id="6BY1">
    <property type="method" value="X-ray"/>
    <property type="resolution" value="3.94 A"/>
    <property type="chains" value="C5=2-110"/>
</dbReference>
<dbReference type="PDB" id="6C4I">
    <property type="method" value="EM"/>
    <property type="resolution" value="3.24 A"/>
    <property type="chains" value="I=1-165"/>
</dbReference>
<dbReference type="PDB" id="6DNC">
    <property type="method" value="EM"/>
    <property type="resolution" value="3.70 A"/>
    <property type="chains" value="L=1-165"/>
</dbReference>
<dbReference type="PDB" id="6GWT">
    <property type="method" value="EM"/>
    <property type="resolution" value="3.80 A"/>
    <property type="chains" value="5=1-131"/>
</dbReference>
<dbReference type="PDB" id="6GXM">
    <property type="method" value="EM"/>
    <property type="resolution" value="3.80 A"/>
    <property type="chains" value="5=1-131"/>
</dbReference>
<dbReference type="PDB" id="6GXN">
    <property type="method" value="EM"/>
    <property type="resolution" value="3.90 A"/>
    <property type="chains" value="5=1-131"/>
</dbReference>
<dbReference type="PDB" id="6GXO">
    <property type="method" value="EM"/>
    <property type="resolution" value="3.90 A"/>
    <property type="chains" value="5=1-131"/>
</dbReference>
<dbReference type="PDB" id="6GXP">
    <property type="method" value="EM"/>
    <property type="resolution" value="4.40 A"/>
    <property type="chains" value="5=1-131"/>
</dbReference>
<dbReference type="PDB" id="6HRM">
    <property type="method" value="EM"/>
    <property type="resolution" value="2.96 A"/>
    <property type="chains" value="H=2-131"/>
</dbReference>
<dbReference type="PDB" id="6I0Y">
    <property type="method" value="EM"/>
    <property type="resolution" value="3.20 A"/>
    <property type="chains" value="5=1-165"/>
</dbReference>
<dbReference type="PDB" id="6O9K">
    <property type="method" value="EM"/>
    <property type="resolution" value="4.00 A"/>
    <property type="chains" value="G=1-117"/>
</dbReference>
<dbReference type="PDB" id="6Q97">
    <property type="method" value="EM"/>
    <property type="resolution" value="3.90 A"/>
    <property type="chains" value="H=2-131"/>
</dbReference>
<dbReference type="PDB" id="6Q98">
    <property type="method" value="EM"/>
    <property type="resolution" value="4.30 A"/>
    <property type="chains" value="H=1-165"/>
</dbReference>
<dbReference type="PDB" id="6Q9A">
    <property type="method" value="EM"/>
    <property type="resolution" value="3.70 A"/>
    <property type="chains" value="H=2-131"/>
</dbReference>
<dbReference type="PDB" id="6VU3">
    <property type="method" value="EM"/>
    <property type="resolution" value="3.70 A"/>
    <property type="chains" value="9=1-148"/>
</dbReference>
<dbReference type="PDB" id="6VYQ">
    <property type="method" value="EM"/>
    <property type="resolution" value="3.70 A"/>
    <property type="chains" value="9=1-165"/>
</dbReference>
<dbReference type="PDB" id="6VYR">
    <property type="method" value="EM"/>
    <property type="resolution" value="3.80 A"/>
    <property type="chains" value="9=1-165"/>
</dbReference>
<dbReference type="PDB" id="6VYS">
    <property type="method" value="EM"/>
    <property type="resolution" value="3.70 A"/>
    <property type="chains" value="9=1-165"/>
</dbReference>
<dbReference type="PDB" id="6VZJ">
    <property type="method" value="EM"/>
    <property type="resolution" value="4.10 A"/>
    <property type="chains" value="9=1-165"/>
</dbReference>
<dbReference type="PDB" id="6WD0">
    <property type="method" value="EM"/>
    <property type="resolution" value="3.00 A"/>
    <property type="chains" value="h=1-131"/>
</dbReference>
<dbReference type="PDB" id="6WD1">
    <property type="method" value="EM"/>
    <property type="resolution" value="3.30 A"/>
    <property type="chains" value="h=1-131"/>
</dbReference>
<dbReference type="PDB" id="6WD2">
    <property type="method" value="EM"/>
    <property type="resolution" value="3.60 A"/>
    <property type="chains" value="h=1-131"/>
</dbReference>
<dbReference type="PDB" id="6WD3">
    <property type="method" value="EM"/>
    <property type="resolution" value="3.60 A"/>
    <property type="chains" value="h=1-131"/>
</dbReference>
<dbReference type="PDB" id="6WD4">
    <property type="method" value="EM"/>
    <property type="resolution" value="3.70 A"/>
    <property type="chains" value="h=1-131"/>
</dbReference>
<dbReference type="PDB" id="6WD5">
    <property type="method" value="EM"/>
    <property type="resolution" value="3.60 A"/>
    <property type="chains" value="h=1-131"/>
</dbReference>
<dbReference type="PDB" id="6WD6">
    <property type="method" value="EM"/>
    <property type="resolution" value="3.70 A"/>
    <property type="chains" value="h=1-131"/>
</dbReference>
<dbReference type="PDB" id="6WD7">
    <property type="method" value="EM"/>
    <property type="resolution" value="3.90 A"/>
    <property type="chains" value="h=1-131"/>
</dbReference>
<dbReference type="PDB" id="6WD8">
    <property type="method" value="EM"/>
    <property type="resolution" value="3.70 A"/>
    <property type="chains" value="h=1-131"/>
</dbReference>
<dbReference type="PDB" id="6WD9">
    <property type="method" value="EM"/>
    <property type="resolution" value="3.70 A"/>
    <property type="chains" value="h=1-131"/>
</dbReference>
<dbReference type="PDB" id="6WDA">
    <property type="method" value="EM"/>
    <property type="resolution" value="3.80 A"/>
    <property type="chains" value="h=1-131"/>
</dbReference>
<dbReference type="PDB" id="6WDB">
    <property type="method" value="EM"/>
    <property type="resolution" value="4.00 A"/>
    <property type="chains" value="h=1-131"/>
</dbReference>
<dbReference type="PDB" id="6WDC">
    <property type="method" value="EM"/>
    <property type="resolution" value="4.20 A"/>
    <property type="chains" value="h=1-131"/>
</dbReference>
<dbReference type="PDB" id="6WDD">
    <property type="method" value="EM"/>
    <property type="resolution" value="3.20 A"/>
    <property type="chains" value="h=1-131"/>
</dbReference>
<dbReference type="PDB" id="6WDE">
    <property type="method" value="EM"/>
    <property type="resolution" value="3.00 A"/>
    <property type="chains" value="h=1-131"/>
</dbReference>
<dbReference type="PDB" id="6WDF">
    <property type="method" value="EM"/>
    <property type="resolution" value="3.30 A"/>
    <property type="chains" value="h=1-131"/>
</dbReference>
<dbReference type="PDB" id="6WDG">
    <property type="method" value="EM"/>
    <property type="resolution" value="3.30 A"/>
    <property type="chains" value="h=1-131"/>
</dbReference>
<dbReference type="PDB" id="6WDH">
    <property type="method" value="EM"/>
    <property type="resolution" value="4.30 A"/>
    <property type="chains" value="h=1-131"/>
</dbReference>
<dbReference type="PDB" id="6WDI">
    <property type="method" value="EM"/>
    <property type="resolution" value="4.00 A"/>
    <property type="chains" value="h=1-131"/>
</dbReference>
<dbReference type="PDB" id="6WDJ">
    <property type="method" value="EM"/>
    <property type="resolution" value="3.70 A"/>
    <property type="chains" value="h=1-131"/>
</dbReference>
<dbReference type="PDB" id="6WDK">
    <property type="method" value="EM"/>
    <property type="resolution" value="3.60 A"/>
    <property type="chains" value="h=1-131"/>
</dbReference>
<dbReference type="PDB" id="6WDL">
    <property type="method" value="EM"/>
    <property type="resolution" value="3.70 A"/>
    <property type="chains" value="h=1-131"/>
</dbReference>
<dbReference type="PDB" id="6WDM">
    <property type="method" value="EM"/>
    <property type="resolution" value="3.60 A"/>
    <property type="chains" value="h=1-131"/>
</dbReference>
<dbReference type="PDB" id="6WNT">
    <property type="method" value="EM"/>
    <property type="resolution" value="3.10 A"/>
    <property type="chains" value="h=1-131"/>
</dbReference>
<dbReference type="PDB" id="6WNV">
    <property type="method" value="EM"/>
    <property type="resolution" value="3.50 A"/>
    <property type="chains" value="h=1-131"/>
</dbReference>
<dbReference type="PDB" id="6WNW">
    <property type="method" value="EM"/>
    <property type="resolution" value="3.20 A"/>
    <property type="chains" value="h=1-131"/>
</dbReference>
<dbReference type="PDB" id="6X6T">
    <property type="method" value="EM"/>
    <property type="resolution" value="3.20 A"/>
    <property type="chains" value="9=1-165"/>
</dbReference>
<dbReference type="PDB" id="6X7F">
    <property type="method" value="EM"/>
    <property type="resolution" value="3.50 A"/>
    <property type="chains" value="9=1-165"/>
</dbReference>
<dbReference type="PDB" id="6X7K">
    <property type="method" value="EM"/>
    <property type="resolution" value="3.10 A"/>
    <property type="chains" value="9=1-165"/>
</dbReference>
<dbReference type="PDB" id="6X9Q">
    <property type="method" value="EM"/>
    <property type="resolution" value="4.80 A"/>
    <property type="chains" value="9=1-165"/>
</dbReference>
<dbReference type="PDB" id="6XDQ">
    <property type="method" value="EM"/>
    <property type="resolution" value="3.70 A"/>
    <property type="chains" value="9=1-165"/>
</dbReference>
<dbReference type="PDB" id="6XDR">
    <property type="method" value="EM"/>
    <property type="resolution" value="4.70 A"/>
    <property type="chains" value="9=1-165"/>
</dbReference>
<dbReference type="PDB" id="6XGF">
    <property type="method" value="EM"/>
    <property type="resolution" value="5.00 A"/>
    <property type="chains" value="9=1-165"/>
</dbReference>
<dbReference type="PDB" id="6XII">
    <property type="method" value="EM"/>
    <property type="resolution" value="7.00 A"/>
    <property type="chains" value="9=1-165"/>
</dbReference>
<dbReference type="PDB" id="6XIJ">
    <property type="method" value="EM"/>
    <property type="resolution" value="8.00 A"/>
    <property type="chains" value="9=1-165"/>
</dbReference>
<dbReference type="PDB" id="6XZ7">
    <property type="method" value="EM"/>
    <property type="resolution" value="2.10 A"/>
    <property type="chains" value="H=2-136"/>
</dbReference>
<dbReference type="PDB" id="6XZA">
    <property type="method" value="EM"/>
    <property type="resolution" value="2.66 A"/>
    <property type="chains" value="H2=2-136"/>
</dbReference>
<dbReference type="PDB" id="6XZB">
    <property type="method" value="EM"/>
    <property type="resolution" value="2.54 A"/>
    <property type="chains" value="H2=2-136"/>
</dbReference>
<dbReference type="PDB" id="6ZTJ">
    <property type="method" value="EM"/>
    <property type="resolution" value="3.40 A"/>
    <property type="chains" value="BI=1-165"/>
</dbReference>
<dbReference type="PDB" id="7ABZ">
    <property type="method" value="EM"/>
    <property type="resolution" value="3.21 A"/>
    <property type="chains" value="H=2-131"/>
</dbReference>
<dbReference type="PDB" id="7AC7">
    <property type="method" value="EM"/>
    <property type="resolution" value="3.08 A"/>
    <property type="chains" value="H=2-131"/>
</dbReference>
<dbReference type="PDB" id="7BL5">
    <property type="method" value="EM"/>
    <property type="resolution" value="3.30 A"/>
    <property type="chains" value="e=1-165"/>
</dbReference>
<dbReference type="PDB" id="7BV8">
    <property type="method" value="EM"/>
    <property type="resolution" value="3.14 A"/>
    <property type="chains" value="I=1-165"/>
</dbReference>
<dbReference type="PDB" id="7JSZ">
    <property type="method" value="EM"/>
    <property type="resolution" value="3.70 A"/>
    <property type="chains" value="h=1-165"/>
</dbReference>
<dbReference type="PDB" id="7JT2">
    <property type="method" value="EM"/>
    <property type="resolution" value="3.50 A"/>
    <property type="chains" value="h=1-165"/>
</dbReference>
<dbReference type="PDB" id="7JT3">
    <property type="method" value="EM"/>
    <property type="resolution" value="3.70 A"/>
    <property type="chains" value="h=1-165"/>
</dbReference>
<dbReference type="PDB" id="7K50">
    <property type="method" value="EM"/>
    <property type="resolution" value="3.40 A"/>
    <property type="chains" value="h=1-131"/>
</dbReference>
<dbReference type="PDB" id="7K51">
    <property type="method" value="EM"/>
    <property type="resolution" value="3.50 A"/>
    <property type="chains" value="h=1-131"/>
</dbReference>
<dbReference type="PDB" id="7K52">
    <property type="method" value="EM"/>
    <property type="resolution" value="3.40 A"/>
    <property type="chains" value="h=1-131"/>
</dbReference>
<dbReference type="PDB" id="7K53">
    <property type="method" value="EM"/>
    <property type="resolution" value="3.20 A"/>
    <property type="chains" value="h=1-131"/>
</dbReference>
<dbReference type="PDB" id="7K54">
    <property type="method" value="EM"/>
    <property type="resolution" value="3.20 A"/>
    <property type="chains" value="h=1-131"/>
</dbReference>
<dbReference type="PDB" id="7K55">
    <property type="method" value="EM"/>
    <property type="resolution" value="3.30 A"/>
    <property type="chains" value="h=1-131"/>
</dbReference>
<dbReference type="PDB" id="7LV0">
    <property type="method" value="EM"/>
    <property type="resolution" value="3.20 A"/>
    <property type="chains" value="h=1-131"/>
</dbReference>
<dbReference type="PDB" id="7M5D">
    <property type="method" value="EM"/>
    <property type="resolution" value="2.80 A"/>
    <property type="chains" value="H=1-131"/>
</dbReference>
<dbReference type="PDB" id="7N1P">
    <property type="method" value="EM"/>
    <property type="resolution" value="2.33 A"/>
    <property type="chains" value="LJ=1-165"/>
</dbReference>
<dbReference type="PDB" id="7N2C">
    <property type="method" value="EM"/>
    <property type="resolution" value="2.72 A"/>
    <property type="chains" value="LJ=1-165"/>
</dbReference>
<dbReference type="PDB" id="7N2V">
    <property type="method" value="EM"/>
    <property type="resolution" value="2.54 A"/>
    <property type="chains" value="LJ=1-165"/>
</dbReference>
<dbReference type="PDB" id="7OJ0">
    <property type="method" value="EM"/>
    <property type="resolution" value="3.50 A"/>
    <property type="chains" value="5=2-131"/>
</dbReference>
<dbReference type="PDB" id="7PJU">
    <property type="method" value="EM"/>
    <property type="resolution" value="9.50 A"/>
    <property type="chains" value="5=1-165"/>
</dbReference>
<dbReference type="PDB" id="7PJV">
    <property type="method" value="EM"/>
    <property type="resolution" value="3.10 A"/>
    <property type="chains" value="5=1-165"/>
</dbReference>
<dbReference type="PDB" id="7PJY">
    <property type="method" value="EM"/>
    <property type="resolution" value="3.10 A"/>
    <property type="chains" value="5=1-165"/>
</dbReference>
<dbReference type="PDB" id="7SA4">
    <property type="method" value="EM"/>
    <property type="resolution" value="2.55 A"/>
    <property type="chains" value="H=1-165"/>
</dbReference>
<dbReference type="PDB" id="7SSO">
    <property type="method" value="EM"/>
    <property type="resolution" value="3.20 A"/>
    <property type="chains" value="h=1-131"/>
</dbReference>
<dbReference type="PDB" id="7ST2">
    <property type="method" value="EM"/>
    <property type="resolution" value="2.90 A"/>
    <property type="chains" value="h=1-131"/>
</dbReference>
<dbReference type="PDB" id="7TOS">
    <property type="method" value="EM"/>
    <property type="resolution" value="2.90 A"/>
    <property type="chains" value="L10=1-131"/>
</dbReference>
<dbReference type="PDB" id="7UG7">
    <property type="method" value="EM"/>
    <property type="resolution" value="2.58 A"/>
    <property type="chains" value="LJ=1-165"/>
</dbReference>
<dbReference type="PDB" id="8FIZ">
    <property type="method" value="EM"/>
    <property type="resolution" value="3.80 A"/>
    <property type="chains" value="DG=1-165"/>
</dbReference>
<dbReference type="PDB" id="8FZD">
    <property type="method" value="EM"/>
    <property type="resolution" value="3.10 A"/>
    <property type="chains" value="I=1-165"/>
</dbReference>
<dbReference type="PDB" id="8FZE">
    <property type="method" value="EM"/>
    <property type="resolution" value="3.00 A"/>
    <property type="chains" value="I=1-165"/>
</dbReference>
<dbReference type="PDB" id="8FZF">
    <property type="method" value="EM"/>
    <property type="resolution" value="3.20 A"/>
    <property type="chains" value="I=1-165"/>
</dbReference>
<dbReference type="PDB" id="8FZG">
    <property type="method" value="EM"/>
    <property type="resolution" value="3.10 A"/>
    <property type="chains" value="I=1-165"/>
</dbReference>
<dbReference type="PDB" id="8FZH">
    <property type="method" value="EM"/>
    <property type="resolution" value="2.90 A"/>
    <property type="chains" value="I=1-165"/>
</dbReference>
<dbReference type="PDB" id="8FZI">
    <property type="method" value="EM"/>
    <property type="resolution" value="3.10 A"/>
    <property type="chains" value="I=1-165"/>
</dbReference>
<dbReference type="PDB" id="8FZJ">
    <property type="method" value="EM"/>
    <property type="resolution" value="3.00 A"/>
    <property type="chains" value="I=1-165"/>
</dbReference>
<dbReference type="PDB" id="8PEG">
    <property type="method" value="EM"/>
    <property type="resolution" value="3.30 A"/>
    <property type="chains" value="j=1-165"/>
</dbReference>
<dbReference type="PDB" id="8PHJ">
    <property type="method" value="EM"/>
    <property type="resolution" value="3.67 A"/>
    <property type="chains" value="5=1-165"/>
</dbReference>
<dbReference type="PDB" id="8PKL">
    <property type="method" value="EM"/>
    <property type="resolution" value="3.09 A"/>
    <property type="chains" value="j=1-165"/>
</dbReference>
<dbReference type="PDB" id="8UPO">
    <property type="method" value="EM"/>
    <property type="resolution" value="5.50 A"/>
    <property type="chains" value="9=1-165"/>
</dbReference>
<dbReference type="PDB" id="8UPR">
    <property type="method" value="EM"/>
    <property type="resolution" value="5.30 A"/>
    <property type="chains" value="9=1-165"/>
</dbReference>
<dbReference type="PDB" id="8UQL">
    <property type="method" value="EM"/>
    <property type="resolution" value="3.20 A"/>
    <property type="chains" value="9=1-165"/>
</dbReference>
<dbReference type="PDB" id="8UQM">
    <property type="method" value="EM"/>
    <property type="resolution" value="5.30 A"/>
    <property type="chains" value="9=1-165"/>
</dbReference>
<dbReference type="PDB" id="8UQP">
    <property type="method" value="EM"/>
    <property type="resolution" value="3.80 A"/>
    <property type="chains" value="9=1-165"/>
</dbReference>
<dbReference type="PDB" id="8UR0">
    <property type="method" value="EM"/>
    <property type="resolution" value="3.40 A"/>
    <property type="chains" value="9=1-165"/>
</dbReference>
<dbReference type="PDB" id="8URH">
    <property type="method" value="EM"/>
    <property type="resolution" value="5.70 A"/>
    <property type="chains" value="9=1-165"/>
</dbReference>
<dbReference type="PDB" id="8URI">
    <property type="method" value="EM"/>
    <property type="resolution" value="5.30 A"/>
    <property type="chains" value="9=1-165"/>
</dbReference>
<dbReference type="PDB" id="8URX">
    <property type="method" value="EM"/>
    <property type="resolution" value="6.60 A"/>
    <property type="chains" value="9=1-165"/>
</dbReference>
<dbReference type="PDB" id="8URY">
    <property type="method" value="EM"/>
    <property type="resolution" value="3.10 A"/>
    <property type="chains" value="9=1-165"/>
</dbReference>
<dbReference type="PDB" id="8VS9">
    <property type="method" value="EM"/>
    <property type="resolution" value="3.90 A"/>
    <property type="chains" value="L10=1-165"/>
</dbReference>
<dbReference type="PDB" id="8VSA">
    <property type="method" value="EM"/>
    <property type="resolution" value="3.70 A"/>
    <property type="chains" value="L10=1-165"/>
</dbReference>
<dbReference type="PDB" id="9GFT">
    <property type="method" value="EM"/>
    <property type="resolution" value="3.10 A"/>
    <property type="chains" value="x=1-165"/>
</dbReference>
<dbReference type="PDB" id="9GGR">
    <property type="method" value="EM"/>
    <property type="resolution" value="3.20 A"/>
    <property type="chains" value="x=1-165"/>
</dbReference>
<dbReference type="PDB" id="9MOR">
    <property type="method" value="EM"/>
    <property type="resolution" value="2.65 A"/>
    <property type="chains" value="H=1-165"/>
</dbReference>
<dbReference type="PDB" id="9MQ4">
    <property type="method" value="EM"/>
    <property type="resolution" value="2.78 A"/>
    <property type="chains" value="H=1-165"/>
</dbReference>
<dbReference type="PDBsum" id="3J7Z"/>
<dbReference type="PDBsum" id="3J9Y"/>
<dbReference type="PDBsum" id="3J9Z"/>
<dbReference type="PDBsum" id="3JA1"/>
<dbReference type="PDBsum" id="3JCJ"/>
<dbReference type="PDBsum" id="4UY8"/>
<dbReference type="PDBsum" id="4V6N"/>
<dbReference type="PDBsum" id="4V6O"/>
<dbReference type="PDBsum" id="4V6P"/>
<dbReference type="PDBsum" id="4V6Q"/>
<dbReference type="PDBsum" id="4V6R"/>
<dbReference type="PDBsum" id="4V6S"/>
<dbReference type="PDBsum" id="4V6V"/>
<dbReference type="PDBsum" id="4V7B"/>
<dbReference type="PDBsum" id="4V7C"/>
<dbReference type="PDBsum" id="4V7D"/>
<dbReference type="PDBsum" id="4V85"/>
<dbReference type="PDBsum" id="4V89"/>
<dbReference type="PDBsum" id="4V9O"/>
<dbReference type="PDBsum" id="4V9P"/>
<dbReference type="PDBsum" id="4YBB"/>
<dbReference type="PDBsum" id="5ADY"/>
<dbReference type="PDBsum" id="5AFI"/>
<dbReference type="PDBsum" id="5GAD"/>
<dbReference type="PDBsum" id="5GAE"/>
<dbReference type="PDBsum" id="5GAF"/>
<dbReference type="PDBsum" id="5GAG"/>
<dbReference type="PDBsum" id="5GAH"/>
<dbReference type="PDBsum" id="5H5U"/>
<dbReference type="PDBsum" id="5IQR"/>
<dbReference type="PDBsum" id="5IT8"/>
<dbReference type="PDBsum" id="5J5B"/>
<dbReference type="PDBsum" id="5J7L"/>
<dbReference type="PDBsum" id="5J88"/>
<dbReference type="PDBsum" id="5J8A"/>
<dbReference type="PDBsum" id="5J91"/>
<dbReference type="PDBsum" id="5JC9"/>
<dbReference type="PDBsum" id="5KCR"/>
<dbReference type="PDBsum" id="5KCS"/>
<dbReference type="PDBsum" id="5KPS"/>
<dbReference type="PDBsum" id="5KPV"/>
<dbReference type="PDBsum" id="5KPW"/>
<dbReference type="PDBsum" id="5KPX"/>
<dbReference type="PDBsum" id="5L3P"/>
<dbReference type="PDBsum" id="5MDV"/>
<dbReference type="PDBsum" id="5MDW"/>
<dbReference type="PDBsum" id="5MDY"/>
<dbReference type="PDBsum" id="5MDZ"/>
<dbReference type="PDBsum" id="5NCO"/>
<dbReference type="PDBsum" id="5NP6"/>
<dbReference type="PDBsum" id="5O2R"/>
<dbReference type="PDBsum" id="5U9F"/>
<dbReference type="PDBsum" id="5U9G"/>
<dbReference type="PDBsum" id="5UYK"/>
<dbReference type="PDBsum" id="5UYL"/>
<dbReference type="PDBsum" id="5UYM"/>
<dbReference type="PDBsum" id="5UYN"/>
<dbReference type="PDBsum" id="5UYP"/>
<dbReference type="PDBsum" id="5UYQ"/>
<dbReference type="PDBsum" id="5WDT"/>
<dbReference type="PDBsum" id="5WE4"/>
<dbReference type="PDBsum" id="5WE6"/>
<dbReference type="PDBsum" id="5WF0"/>
<dbReference type="PDBsum" id="5WFK"/>
<dbReference type="PDBsum" id="5WFS"/>
<dbReference type="PDBsum" id="6BU8"/>
<dbReference type="PDBsum" id="6BY1"/>
<dbReference type="PDBsum" id="6C4I"/>
<dbReference type="PDBsum" id="6DNC"/>
<dbReference type="PDBsum" id="6GWT"/>
<dbReference type="PDBsum" id="6GXM"/>
<dbReference type="PDBsum" id="6GXN"/>
<dbReference type="PDBsum" id="6GXO"/>
<dbReference type="PDBsum" id="6GXP"/>
<dbReference type="PDBsum" id="6HRM"/>
<dbReference type="PDBsum" id="6I0Y"/>
<dbReference type="PDBsum" id="6O9K"/>
<dbReference type="PDBsum" id="6Q97"/>
<dbReference type="PDBsum" id="6Q98"/>
<dbReference type="PDBsum" id="6Q9A"/>
<dbReference type="PDBsum" id="6VU3"/>
<dbReference type="PDBsum" id="6VYQ"/>
<dbReference type="PDBsum" id="6VYR"/>
<dbReference type="PDBsum" id="6VYS"/>
<dbReference type="PDBsum" id="6VZJ"/>
<dbReference type="PDBsum" id="6WD0"/>
<dbReference type="PDBsum" id="6WD1"/>
<dbReference type="PDBsum" id="6WD2"/>
<dbReference type="PDBsum" id="6WD3"/>
<dbReference type="PDBsum" id="6WD4"/>
<dbReference type="PDBsum" id="6WD5"/>
<dbReference type="PDBsum" id="6WD6"/>
<dbReference type="PDBsum" id="6WD7"/>
<dbReference type="PDBsum" id="6WD8"/>
<dbReference type="PDBsum" id="6WD9"/>
<dbReference type="PDBsum" id="6WDA"/>
<dbReference type="PDBsum" id="6WDB"/>
<dbReference type="PDBsum" id="6WDC"/>
<dbReference type="PDBsum" id="6WDD"/>
<dbReference type="PDBsum" id="6WDE"/>
<dbReference type="PDBsum" id="6WDF"/>
<dbReference type="PDBsum" id="6WDG"/>
<dbReference type="PDBsum" id="6WDH"/>
<dbReference type="PDBsum" id="6WDI"/>
<dbReference type="PDBsum" id="6WDJ"/>
<dbReference type="PDBsum" id="6WDK"/>
<dbReference type="PDBsum" id="6WDL"/>
<dbReference type="PDBsum" id="6WDM"/>
<dbReference type="PDBsum" id="6WNT"/>
<dbReference type="PDBsum" id="6WNV"/>
<dbReference type="PDBsum" id="6WNW"/>
<dbReference type="PDBsum" id="6X6T"/>
<dbReference type="PDBsum" id="6X7F"/>
<dbReference type="PDBsum" id="6X7K"/>
<dbReference type="PDBsum" id="6X9Q"/>
<dbReference type="PDBsum" id="6XDQ"/>
<dbReference type="PDBsum" id="6XDR"/>
<dbReference type="PDBsum" id="6XGF"/>
<dbReference type="PDBsum" id="6XII"/>
<dbReference type="PDBsum" id="6XIJ"/>
<dbReference type="PDBsum" id="6XZ7"/>
<dbReference type="PDBsum" id="6XZA"/>
<dbReference type="PDBsum" id="6XZB"/>
<dbReference type="PDBsum" id="6ZTJ"/>
<dbReference type="PDBsum" id="7ABZ"/>
<dbReference type="PDBsum" id="7AC7"/>
<dbReference type="PDBsum" id="7BL5"/>
<dbReference type="PDBsum" id="7BV8"/>
<dbReference type="PDBsum" id="7JSZ"/>
<dbReference type="PDBsum" id="7JT2"/>
<dbReference type="PDBsum" id="7JT3"/>
<dbReference type="PDBsum" id="7K50"/>
<dbReference type="PDBsum" id="7K51"/>
<dbReference type="PDBsum" id="7K52"/>
<dbReference type="PDBsum" id="7K53"/>
<dbReference type="PDBsum" id="7K54"/>
<dbReference type="PDBsum" id="7K55"/>
<dbReference type="PDBsum" id="7LV0"/>
<dbReference type="PDBsum" id="7M5D"/>
<dbReference type="PDBsum" id="7N1P"/>
<dbReference type="PDBsum" id="7N2C"/>
<dbReference type="PDBsum" id="7N2V"/>
<dbReference type="PDBsum" id="7OJ0"/>
<dbReference type="PDBsum" id="7PJU"/>
<dbReference type="PDBsum" id="7PJV"/>
<dbReference type="PDBsum" id="7PJY"/>
<dbReference type="PDBsum" id="7SA4"/>
<dbReference type="PDBsum" id="7SSO"/>
<dbReference type="PDBsum" id="7ST2"/>
<dbReference type="PDBsum" id="7TOS"/>
<dbReference type="PDBsum" id="7UG7"/>
<dbReference type="PDBsum" id="8FIZ"/>
<dbReference type="PDBsum" id="8FZD"/>
<dbReference type="PDBsum" id="8FZE"/>
<dbReference type="PDBsum" id="8FZF"/>
<dbReference type="PDBsum" id="8FZG"/>
<dbReference type="PDBsum" id="8FZH"/>
<dbReference type="PDBsum" id="8FZI"/>
<dbReference type="PDBsum" id="8FZJ"/>
<dbReference type="PDBsum" id="8PEG"/>
<dbReference type="PDBsum" id="8PHJ"/>
<dbReference type="PDBsum" id="8PKL"/>
<dbReference type="PDBsum" id="8UPO"/>
<dbReference type="PDBsum" id="8UPR"/>
<dbReference type="PDBsum" id="8UQL"/>
<dbReference type="PDBsum" id="8UQM"/>
<dbReference type="PDBsum" id="8UQP"/>
<dbReference type="PDBsum" id="8UR0"/>
<dbReference type="PDBsum" id="8URH"/>
<dbReference type="PDBsum" id="8URI"/>
<dbReference type="PDBsum" id="8URX"/>
<dbReference type="PDBsum" id="8URY"/>
<dbReference type="PDBsum" id="8VS9"/>
<dbReference type="PDBsum" id="8VSA"/>
<dbReference type="PDBsum" id="9GFT"/>
<dbReference type="PDBsum" id="9GGR"/>
<dbReference type="PDBsum" id="9MOR"/>
<dbReference type="PDBsum" id="9MQ4"/>
<dbReference type="EMDB" id="EMD-0076"/>
<dbReference type="EMDB" id="EMD-0080"/>
<dbReference type="EMDB" id="EMD-0081"/>
<dbReference type="EMDB" id="EMD-0082"/>
<dbReference type="EMDB" id="EMD-0083"/>
<dbReference type="EMDB" id="EMD-0261"/>
<dbReference type="EMDB" id="EMD-0322"/>
<dbReference type="EMDB" id="EMD-10655"/>
<dbReference type="EMDB" id="EMD-10656"/>
<dbReference type="EMDB" id="EMD-10657"/>
<dbReference type="EMDB" id="EMD-11710"/>
<dbReference type="EMDB" id="EMD-11713"/>
<dbReference type="EMDB" id="EMD-12218"/>
<dbReference type="EMDB" id="EMD-12937"/>
<dbReference type="EMDB" id="EMD-13461"/>
<dbReference type="EMDB" id="EMD-13464"/>
<dbReference type="EMDB" id="EMD-17631"/>
<dbReference type="EMDB" id="EMD-17667"/>
<dbReference type="EMDB" id="EMD-17743"/>
<dbReference type="EMDB" id="EMD-21620"/>
<dbReference type="EMDB" id="EMD-21625"/>
<dbReference type="EMDB" id="EMD-21630"/>
<dbReference type="EMDB" id="EMD-21631"/>
<dbReference type="EMDB" id="EMD-21632"/>
<dbReference type="EMDB" id="EMD-21633"/>
<dbReference type="EMDB" id="EMD-21634"/>
<dbReference type="EMDB" id="EMD-21635"/>
<dbReference type="EMDB" id="EMD-21636"/>
<dbReference type="EMDB" id="EMD-21637"/>
<dbReference type="EMDB" id="EMD-21638"/>
<dbReference type="EMDB" id="EMD-21639"/>
<dbReference type="EMDB" id="EMD-21640"/>
<dbReference type="EMDB" id="EMD-21641"/>
<dbReference type="EMDB" id="EMD-21856"/>
<dbReference type="EMDB" id="EMD-21857"/>
<dbReference type="EMDB" id="EMD-21858"/>
<dbReference type="EMDB" id="EMD-22464"/>
<dbReference type="EMDB" id="EMD-22469"/>
<dbReference type="EMDB" id="EMD-22472"/>
<dbReference type="EMDB" id="EMD-22669"/>
<dbReference type="EMDB" id="EMD-22670"/>
<dbReference type="EMDB" id="EMD-22671"/>
<dbReference type="EMDB" id="EMD-22672"/>
<dbReference type="EMDB" id="EMD-22673"/>
<dbReference type="EMDB" id="EMD-22674"/>
<dbReference type="EMDB" id="EMD-23528"/>
<dbReference type="EMDB" id="EMD-24120"/>
<dbReference type="EMDB" id="EMD-24132"/>
<dbReference type="EMDB" id="EMD-24134"/>
<dbReference type="EMDB" id="EMD-25411"/>
<dbReference type="EMDB" id="EMD-25418"/>
<dbReference type="EMDB" id="EMD-26486"/>
<dbReference type="EMDB" id="EMD-29214"/>
<dbReference type="EMDB" id="EMD-29620"/>
<dbReference type="EMDB" id="EMD-29621"/>
<dbReference type="EMDB" id="EMD-29624"/>
<dbReference type="EMDB" id="EMD-29627"/>
<dbReference type="EMDB" id="EMD-29628"/>
<dbReference type="EMDB" id="EMD-29631"/>
<dbReference type="EMDB" id="EMD-29634"/>
<dbReference type="EMDB" id="EMD-30215"/>
<dbReference type="EMDB" id="EMD-3489"/>
<dbReference type="EMDB" id="EMD-3490"/>
<dbReference type="EMDB" id="EMD-3492"/>
<dbReference type="EMDB" id="EMD-3493"/>
<dbReference type="EMDB" id="EMD-3617"/>
<dbReference type="EMDB" id="EMD-3730"/>
<dbReference type="EMDB" id="EMD-4001"/>
<dbReference type="EMDB" id="EMD-42453"/>
<dbReference type="EMDB" id="EMD-42454"/>
<dbReference type="EMDB" id="EMD-42473"/>
<dbReference type="EMDB" id="EMD-42474"/>
<dbReference type="EMDB" id="EMD-42477"/>
<dbReference type="EMDB" id="EMD-42479"/>
<dbReference type="EMDB" id="EMD-42492"/>
<dbReference type="EMDB" id="EMD-42493"/>
<dbReference type="EMDB" id="EMD-42503"/>
<dbReference type="EMDB" id="EMD-42504"/>
<dbReference type="EMDB" id="EMD-43490"/>
<dbReference type="EMDB" id="EMD-43491"/>
<dbReference type="EMDB" id="EMD-4476"/>
<dbReference type="EMDB" id="EMD-4477"/>
<dbReference type="EMDB" id="EMD-4478"/>
<dbReference type="EMDB" id="EMD-48479"/>
<dbReference type="EMDB" id="EMD-48513"/>
<dbReference type="EMDB" id="EMD-51318"/>
<dbReference type="EMDB" id="EMD-51340"/>
<dbReference type="EMDB" id="EMD-6667"/>
<dbReference type="EMDB" id="EMD-7289"/>
<dbReference type="EMDB" id="EMD-7341"/>
<dbReference type="EMDB" id="EMD-8000"/>
<dbReference type="EMDB" id="EMD-8001"/>
<dbReference type="EMDB" id="EMD-8002"/>
<dbReference type="EMDB" id="EMD-8003"/>
<dbReference type="EMDB" id="EMD-8004"/>
<dbReference type="EMDB" id="EMD-8107"/>
<dbReference type="EMDB" id="EMD-8237"/>
<dbReference type="EMDB" id="EMD-8238"/>
<dbReference type="EMDB" id="EMD-8279"/>
<dbReference type="EMDB" id="EMD-8280"/>
<dbReference type="EMDB" id="EMD-8281"/>
<dbReference type="EMDB" id="EMD-8282"/>
<dbReference type="EMDB" id="EMD-8615"/>
<dbReference type="EMDB" id="EMD-8616"/>
<dbReference type="EMDB" id="EMD-8617"/>
<dbReference type="EMDB" id="EMD-8618"/>
<dbReference type="EMDB" id="EMD-8619"/>
<dbReference type="EMDB" id="EMD-8620"/>
<dbReference type="EMDB" id="EMD-8813"/>
<dbReference type="EMDB" id="EMD-8814"/>
<dbReference type="EMDB" id="EMD-8815"/>
<dbReference type="EMDB" id="EMD-8828"/>
<dbReference type="SMR" id="P0A7J3"/>
<dbReference type="BioGRID" id="4259508">
    <property type="interactions" value="32"/>
</dbReference>
<dbReference type="BioGRID" id="852784">
    <property type="interactions" value="2"/>
</dbReference>
<dbReference type="ComplexPortal" id="CPX-3807">
    <property type="entry name" value="50S large ribosomal subunit"/>
</dbReference>
<dbReference type="DIP" id="DIP-35816N"/>
<dbReference type="FunCoup" id="P0A7J3">
    <property type="interactions" value="931"/>
</dbReference>
<dbReference type="IntAct" id="P0A7J3">
    <property type="interactions" value="111"/>
</dbReference>
<dbReference type="STRING" id="511145.b3985"/>
<dbReference type="MoonProt" id="P0A7J3"/>
<dbReference type="iPTMnet" id="P0A7J3"/>
<dbReference type="jPOST" id="P0A7J3"/>
<dbReference type="PaxDb" id="511145-b3985"/>
<dbReference type="EnsemblBacteria" id="AAC76959">
    <property type="protein sequence ID" value="AAC76959"/>
    <property type="gene ID" value="b3985"/>
</dbReference>
<dbReference type="GeneID" id="93777909"/>
<dbReference type="GeneID" id="948490"/>
<dbReference type="KEGG" id="ecj:JW3948"/>
<dbReference type="KEGG" id="eco:b3985"/>
<dbReference type="KEGG" id="ecoc:C3026_21525"/>
<dbReference type="PATRIC" id="fig|1411691.4.peg.2727"/>
<dbReference type="EchoBASE" id="EB0864"/>
<dbReference type="eggNOG" id="COG0244">
    <property type="taxonomic scope" value="Bacteria"/>
</dbReference>
<dbReference type="HOGENOM" id="CLU_092227_0_2_6"/>
<dbReference type="InParanoid" id="P0A7J3"/>
<dbReference type="OMA" id="VRDQKQA"/>
<dbReference type="OrthoDB" id="9808307at2"/>
<dbReference type="PhylomeDB" id="P0A7J3"/>
<dbReference type="BioCyc" id="EcoCyc:EG10871-MONOMER"/>
<dbReference type="BioCyc" id="MetaCyc:EG10871-MONOMER"/>
<dbReference type="EvolutionaryTrace" id="P0A7J3"/>
<dbReference type="PRO" id="PR:P0A7J3"/>
<dbReference type="Proteomes" id="UP000000625">
    <property type="component" value="Chromosome"/>
</dbReference>
<dbReference type="GO" id="GO:0005737">
    <property type="term" value="C:cytoplasm"/>
    <property type="evidence" value="ECO:0000314"/>
    <property type="project" value="ComplexPortal"/>
</dbReference>
<dbReference type="GO" id="GO:0005829">
    <property type="term" value="C:cytosol"/>
    <property type="evidence" value="ECO:0000314"/>
    <property type="project" value="EcoCyc"/>
</dbReference>
<dbReference type="GO" id="GO:0022625">
    <property type="term" value="C:cytosolic large ribosomal subunit"/>
    <property type="evidence" value="ECO:0000314"/>
    <property type="project" value="EcoCyc"/>
</dbReference>
<dbReference type="GO" id="GO:0015934">
    <property type="term" value="C:large ribosomal subunit"/>
    <property type="evidence" value="ECO:0000314"/>
    <property type="project" value="CAFA"/>
</dbReference>
<dbReference type="GO" id="GO:0070180">
    <property type="term" value="F:large ribosomal subunit rRNA binding"/>
    <property type="evidence" value="ECO:0007669"/>
    <property type="project" value="UniProtKB-UniRule"/>
</dbReference>
<dbReference type="GO" id="GO:0043022">
    <property type="term" value="F:ribosome binding"/>
    <property type="evidence" value="ECO:0000315"/>
    <property type="project" value="CAFA"/>
</dbReference>
<dbReference type="GO" id="GO:0003735">
    <property type="term" value="F:structural constituent of ribosome"/>
    <property type="evidence" value="ECO:0000318"/>
    <property type="project" value="GO_Central"/>
</dbReference>
<dbReference type="GO" id="GO:0002181">
    <property type="term" value="P:cytoplasmic translation"/>
    <property type="evidence" value="ECO:0000303"/>
    <property type="project" value="ComplexPortal"/>
</dbReference>
<dbReference type="GO" id="GO:0017148">
    <property type="term" value="P:negative regulation of translation"/>
    <property type="evidence" value="ECO:0000314"/>
    <property type="project" value="CAFA"/>
</dbReference>
<dbReference type="GO" id="GO:0006412">
    <property type="term" value="P:translation"/>
    <property type="evidence" value="ECO:0000314"/>
    <property type="project" value="CAFA"/>
</dbReference>
<dbReference type="CDD" id="cd05797">
    <property type="entry name" value="Ribosomal_L10"/>
    <property type="match status" value="1"/>
</dbReference>
<dbReference type="FunFam" id="3.30.70.1730:FF:000001">
    <property type="entry name" value="50S ribosomal protein L10"/>
    <property type="match status" value="1"/>
</dbReference>
<dbReference type="Gene3D" id="3.30.70.1730">
    <property type="match status" value="1"/>
</dbReference>
<dbReference type="Gene3D" id="6.10.250.2350">
    <property type="match status" value="1"/>
</dbReference>
<dbReference type="HAMAP" id="MF_00362">
    <property type="entry name" value="Ribosomal_uL10"/>
    <property type="match status" value="1"/>
</dbReference>
<dbReference type="InterPro" id="IPR001790">
    <property type="entry name" value="Ribosomal_uL10"/>
</dbReference>
<dbReference type="InterPro" id="IPR043141">
    <property type="entry name" value="Ribosomal_uL10-like_sf"/>
</dbReference>
<dbReference type="InterPro" id="IPR022973">
    <property type="entry name" value="Ribosomal_uL10_bac"/>
</dbReference>
<dbReference type="InterPro" id="IPR047865">
    <property type="entry name" value="Ribosomal_uL10_bac_type"/>
</dbReference>
<dbReference type="InterPro" id="IPR002363">
    <property type="entry name" value="Ribosomal_uL10_CS_bac"/>
</dbReference>
<dbReference type="NCBIfam" id="NF000955">
    <property type="entry name" value="PRK00099.1-1"/>
    <property type="match status" value="1"/>
</dbReference>
<dbReference type="PANTHER" id="PTHR11560">
    <property type="entry name" value="39S RIBOSOMAL PROTEIN L10, MITOCHONDRIAL"/>
    <property type="match status" value="1"/>
</dbReference>
<dbReference type="Pfam" id="PF00466">
    <property type="entry name" value="Ribosomal_L10"/>
    <property type="match status" value="1"/>
</dbReference>
<dbReference type="SUPFAM" id="SSF160369">
    <property type="entry name" value="Ribosomal protein L10-like"/>
    <property type="match status" value="1"/>
</dbReference>
<dbReference type="PROSITE" id="PS01109">
    <property type="entry name" value="RIBOSOMAL_L10"/>
    <property type="match status" value="1"/>
</dbReference>
<proteinExistence type="evidence at protein level"/>
<gene>
    <name type="primary">rplJ</name>
    <name type="ordered locus">b3985</name>
    <name type="ordered locus">JW3948</name>
</gene>
<protein>
    <recommendedName>
        <fullName evidence="13">Large ribosomal subunit protein uL10</fullName>
    </recommendedName>
    <alternativeName>
        <fullName>50S ribosomal protein L10</fullName>
    </alternativeName>
    <alternativeName>
        <fullName>50S ribosomal protein L8</fullName>
    </alternativeName>
</protein>
<comment type="function">
    <text evidence="2">Forms part of the ribosomal stalk, playing a central role in the interaction of the ribosome with GTP-bound translation factors.</text>
</comment>
<comment type="function">
    <text evidence="5">Protein L10 is also a translational repressor protein. It controls the translation of the rplJL-rpoBC operon by binding to its mRNA.</text>
</comment>
<comment type="subunit">
    <text evidence="1 2 6 7 8 9 10 11 12">Part of the ribosomal stalk of the 50S ribosomal subunit (PubMed:15923259). The N-terminus interacts with L11 and the large rRNA to form the base of the stalk. The C-terminus forms an elongated spine to which 2 L12 dimers bind in a sequential fashion forming a pentameric L10(L12)(L12)2 complex. Two L12 dimers associate with a copy of L10 to form a very strong complex (called L8).</text>
</comment>
<comment type="interaction">
    <interactant intactId="EBI-546827">
        <id>P0A7J3</id>
    </interactant>
    <interactant intactId="EBI-557460">
        <id>P37351</id>
        <label>rpiB</label>
    </interactant>
    <organismsDiffer>false</organismsDiffer>
    <experiments>2</experiments>
</comment>
<comment type="mass spectrometry"/>
<comment type="mass spectrometry">
    <text>Isolated L10(L12)4.</text>
</comment>
<comment type="mass spectrometry"/>
<comment type="miscellaneous">
    <text evidence="10">Ribosomal protein L8 appears to be an aggregate of ribosomal proteins L7/L12 and L10.</text>
</comment>
<comment type="similarity">
    <text evidence="14">Belongs to the universal ribosomal protein uL10 family.</text>
</comment>
<organism>
    <name type="scientific">Escherichia coli (strain K12)</name>
    <dbReference type="NCBI Taxonomy" id="83333"/>
    <lineage>
        <taxon>Bacteria</taxon>
        <taxon>Pseudomonadati</taxon>
        <taxon>Pseudomonadota</taxon>
        <taxon>Gammaproteobacteria</taxon>
        <taxon>Enterobacterales</taxon>
        <taxon>Enterobacteriaceae</taxon>
        <taxon>Escherichia</taxon>
    </lineage>
</organism>
<evidence type="ECO:0000269" key="1">
    <source>
    </source>
</evidence>
<evidence type="ECO:0000269" key="2">
    <source>
    </source>
</evidence>
<evidence type="ECO:0000269" key="3">
    <source>
    </source>
</evidence>
<evidence type="ECO:0000269" key="4">
    <source>
    </source>
</evidence>
<evidence type="ECO:0000269" key="5">
    <source>
    </source>
</evidence>
<evidence type="ECO:0000269" key="6">
    <source>
    </source>
</evidence>
<evidence type="ECO:0000269" key="7">
    <source>
    </source>
</evidence>
<evidence type="ECO:0000269" key="8">
    <source>
    </source>
</evidence>
<evidence type="ECO:0000269" key="9">
    <source>
    </source>
</evidence>
<evidence type="ECO:0000269" key="10">
    <source>
    </source>
</evidence>
<evidence type="ECO:0000269" key="11">
    <source>
    </source>
</evidence>
<evidence type="ECO:0000269" key="12">
    <source>
    </source>
</evidence>
<evidence type="ECO:0000303" key="13">
    <source>
    </source>
</evidence>
<evidence type="ECO:0000305" key="14"/>
<evidence type="ECO:0007829" key="15">
    <source>
        <dbReference type="PDB" id="6I0Y"/>
    </source>
</evidence>
<evidence type="ECO:0007829" key="16">
    <source>
        <dbReference type="PDB" id="6XZ7"/>
    </source>
</evidence>
<feature type="initiator methionine" description="Removed" evidence="10 11 12">
    <location>
        <position position="1"/>
    </location>
</feature>
<feature type="chain" id="PRO_0000154627" description="Large ribosomal subunit protein uL10">
    <location>
        <begin position="2"/>
        <end position="165"/>
    </location>
</feature>
<feature type="modified residue" description="N6-acetyllysine" evidence="3">
    <location>
        <position position="37"/>
    </location>
</feature>
<feature type="modified residue" description="N6-acetyllysine" evidence="3">
    <location>
        <position position="105"/>
    </location>
</feature>
<feature type="mutagenesis site" description="Generation time doubles, only 1 L12 dimer binds to the ribosome. Decreased association of IF-2 with L7/L12 and decreased stimulation of GTPase activity of EF-G by L7/L12." evidence="4">
    <location>
        <begin position="156"/>
        <end position="165"/>
    </location>
</feature>
<feature type="sequence conflict" description="In Ref. 5; AA sequence, 6; AA sequence and 7; AA sequence." evidence="14" ref="5 6 7">
    <original>Y</original>
    <variation>YR</variation>
    <location>
        <position position="84"/>
    </location>
</feature>
<feature type="sequence conflict" description="In Ref. 5; AA sequence." evidence="14" ref="5">
    <original>E</original>
    <variation>Q</variation>
    <location>
        <position position="116"/>
    </location>
</feature>
<feature type="helix" evidence="16">
    <location>
        <begin position="5"/>
        <end position="21"/>
    </location>
</feature>
<feature type="strand" evidence="16">
    <location>
        <begin position="23"/>
        <end position="28"/>
    </location>
</feature>
<feature type="helix" evidence="16">
    <location>
        <begin position="35"/>
        <end position="47"/>
    </location>
</feature>
<feature type="strand" evidence="16">
    <location>
        <begin position="50"/>
        <end position="54"/>
    </location>
</feature>
<feature type="helix" evidence="16">
    <location>
        <begin position="57"/>
        <end position="64"/>
    </location>
</feature>
<feature type="turn" evidence="16">
    <location>
        <begin position="65"/>
        <end position="68"/>
    </location>
</feature>
<feature type="helix" evidence="16">
    <location>
        <begin position="71"/>
        <end position="75"/>
    </location>
</feature>
<feature type="strand" evidence="16">
    <location>
        <begin position="77"/>
        <end position="79"/>
    </location>
</feature>
<feature type="strand" evidence="16">
    <location>
        <begin position="81"/>
        <end position="85"/>
    </location>
</feature>
<feature type="strand" evidence="16">
    <location>
        <begin position="87"/>
        <end position="91"/>
    </location>
</feature>
<feature type="helix" evidence="16">
    <location>
        <begin position="92"/>
        <end position="103"/>
    </location>
</feature>
<feature type="strand" evidence="15">
    <location>
        <begin position="105"/>
        <end position="108"/>
    </location>
</feature>
<feature type="strand" evidence="16">
    <location>
        <begin position="111"/>
        <end position="113"/>
    </location>
</feature>
<feature type="strand" evidence="16">
    <location>
        <begin position="116"/>
        <end position="118"/>
    </location>
</feature>
<feature type="helix" evidence="16">
    <location>
        <begin position="121"/>
        <end position="128"/>
    </location>
</feature>
<feature type="helix" evidence="16">
    <location>
        <begin position="132"/>
        <end position="134"/>
    </location>
</feature>
<feature type="helix" evidence="15">
    <location>
        <begin position="140"/>
        <end position="147"/>
    </location>
</feature>
<accession>P0A7J3</accession>
<accession>P02408</accession>
<accession>Q2M8S1</accession>